<sequence length="148" mass="16833">MAGNRRIRVVVGGVFDILHVGHIHFLKMAKELGDELIVIVAHDETVKKRKGRPPINPAEDRAEVLRAIRYVDDVVIGEPGEISLELIKKLKPDVIALGPDQDFDCRTLKEKLRSIGLKVEVIRLPYLYKEDRAKTSKIIKRITEIFCD</sequence>
<evidence type="ECO:0000255" key="1">
    <source>
        <dbReference type="HAMAP-Rule" id="MF_02115"/>
    </source>
</evidence>
<proteinExistence type="inferred from homology"/>
<protein>
    <recommendedName>
        <fullName evidence="1">FAD synthase</fullName>
        <ecNumber evidence="1">2.7.7.2</ecNumber>
    </recommendedName>
    <alternativeName>
        <fullName evidence="1">FMN adenylyltransferase</fullName>
    </alternativeName>
    <alternativeName>
        <fullName evidence="1">Flavin adenine dinucleotide synthase</fullName>
    </alternativeName>
</protein>
<dbReference type="EC" id="2.7.7.2" evidence="1"/>
<dbReference type="EMBL" id="AJ248287">
    <property type="protein sequence ID" value="CAB50222.1"/>
    <property type="molecule type" value="Genomic_DNA"/>
</dbReference>
<dbReference type="EMBL" id="HE613800">
    <property type="protein sequence ID" value="CCE70758.1"/>
    <property type="molecule type" value="Genomic_DNA"/>
</dbReference>
<dbReference type="PIR" id="A75041">
    <property type="entry name" value="A75041"/>
</dbReference>
<dbReference type="RefSeq" id="WP_010868432.1">
    <property type="nucleotide sequence ID" value="NC_000868.1"/>
</dbReference>
<dbReference type="SMR" id="Q9UZ37"/>
<dbReference type="STRING" id="272844.PAB1507"/>
<dbReference type="KEGG" id="pab:PAB1507"/>
<dbReference type="PATRIC" id="fig|272844.11.peg.1401"/>
<dbReference type="eggNOG" id="arCOG01222">
    <property type="taxonomic scope" value="Archaea"/>
</dbReference>
<dbReference type="HOGENOM" id="CLU_034585_2_1_2"/>
<dbReference type="OrthoDB" id="1912at2157"/>
<dbReference type="PhylomeDB" id="Q9UZ37"/>
<dbReference type="UniPathway" id="UPA00277">
    <property type="reaction ID" value="UER00407"/>
</dbReference>
<dbReference type="Proteomes" id="UP000000810">
    <property type="component" value="Chromosome"/>
</dbReference>
<dbReference type="Proteomes" id="UP000009139">
    <property type="component" value="Chromosome"/>
</dbReference>
<dbReference type="GO" id="GO:0005524">
    <property type="term" value="F:ATP binding"/>
    <property type="evidence" value="ECO:0007669"/>
    <property type="project" value="UniProtKB-UniRule"/>
</dbReference>
<dbReference type="GO" id="GO:0003919">
    <property type="term" value="F:FMN adenylyltransferase activity"/>
    <property type="evidence" value="ECO:0007669"/>
    <property type="project" value="UniProtKB-UniRule"/>
</dbReference>
<dbReference type="GO" id="GO:0006747">
    <property type="term" value="P:FAD biosynthetic process"/>
    <property type="evidence" value="ECO:0007669"/>
    <property type="project" value="UniProtKB-UniRule"/>
</dbReference>
<dbReference type="GO" id="GO:0046444">
    <property type="term" value="P:FMN metabolic process"/>
    <property type="evidence" value="ECO:0007669"/>
    <property type="project" value="UniProtKB-UniRule"/>
</dbReference>
<dbReference type="Gene3D" id="3.40.50.620">
    <property type="entry name" value="HUPs"/>
    <property type="match status" value="1"/>
</dbReference>
<dbReference type="HAMAP" id="MF_02115">
    <property type="entry name" value="FAD_synth_arch"/>
    <property type="match status" value="1"/>
</dbReference>
<dbReference type="InterPro" id="IPR050385">
    <property type="entry name" value="Archaeal_FAD_synthase"/>
</dbReference>
<dbReference type="InterPro" id="IPR004821">
    <property type="entry name" value="Cyt_trans-like"/>
</dbReference>
<dbReference type="InterPro" id="IPR024902">
    <property type="entry name" value="FAD_synth_RibL"/>
</dbReference>
<dbReference type="InterPro" id="IPR014729">
    <property type="entry name" value="Rossmann-like_a/b/a_fold"/>
</dbReference>
<dbReference type="NCBIfam" id="TIGR00125">
    <property type="entry name" value="cyt_tran_rel"/>
    <property type="match status" value="1"/>
</dbReference>
<dbReference type="PANTHER" id="PTHR43793">
    <property type="entry name" value="FAD SYNTHASE"/>
    <property type="match status" value="1"/>
</dbReference>
<dbReference type="PANTHER" id="PTHR43793:SF1">
    <property type="entry name" value="FAD SYNTHASE"/>
    <property type="match status" value="1"/>
</dbReference>
<dbReference type="Pfam" id="PF01467">
    <property type="entry name" value="CTP_transf_like"/>
    <property type="match status" value="1"/>
</dbReference>
<dbReference type="SUPFAM" id="SSF52374">
    <property type="entry name" value="Nucleotidylyl transferase"/>
    <property type="match status" value="1"/>
</dbReference>
<accession>Q9UZ37</accession>
<accession>G8ZHC1</accession>
<keyword id="KW-0067">ATP-binding</keyword>
<keyword id="KW-0274">FAD</keyword>
<keyword id="KW-0285">Flavoprotein</keyword>
<keyword id="KW-0288">FMN</keyword>
<keyword id="KW-0547">Nucleotide-binding</keyword>
<keyword id="KW-0548">Nucleotidyltransferase</keyword>
<keyword id="KW-0808">Transferase</keyword>
<organism>
    <name type="scientific">Pyrococcus abyssi (strain GE5 / Orsay)</name>
    <dbReference type="NCBI Taxonomy" id="272844"/>
    <lineage>
        <taxon>Archaea</taxon>
        <taxon>Methanobacteriati</taxon>
        <taxon>Methanobacteriota</taxon>
        <taxon>Thermococci</taxon>
        <taxon>Thermococcales</taxon>
        <taxon>Thermococcaceae</taxon>
        <taxon>Pyrococcus</taxon>
    </lineage>
</organism>
<comment type="function">
    <text evidence="1">Catalyzes the transfer of the AMP portion of ATP to flavin mononucleotide (FMN) to produce flavin adenine dinucleotide (FAD) coenzyme.</text>
</comment>
<comment type="catalytic activity">
    <reaction evidence="1">
        <text>FMN + ATP + H(+) = FAD + diphosphate</text>
        <dbReference type="Rhea" id="RHEA:17237"/>
        <dbReference type="ChEBI" id="CHEBI:15378"/>
        <dbReference type="ChEBI" id="CHEBI:30616"/>
        <dbReference type="ChEBI" id="CHEBI:33019"/>
        <dbReference type="ChEBI" id="CHEBI:57692"/>
        <dbReference type="ChEBI" id="CHEBI:58210"/>
        <dbReference type="EC" id="2.7.7.2"/>
    </reaction>
</comment>
<comment type="cofactor">
    <cofactor evidence="1">
        <name>a divalent metal cation</name>
        <dbReference type="ChEBI" id="CHEBI:60240"/>
    </cofactor>
</comment>
<comment type="pathway">
    <text evidence="1">Cofactor biosynthesis; FAD biosynthesis; FAD from FMN: step 1/1.</text>
</comment>
<comment type="subunit">
    <text evidence="1">Homodimer.</text>
</comment>
<comment type="similarity">
    <text evidence="1">Belongs to the archaeal FAD synthase family.</text>
</comment>
<feature type="chain" id="PRO_0000406279" description="FAD synthase">
    <location>
        <begin position="1"/>
        <end position="148"/>
    </location>
</feature>
<feature type="binding site" evidence="1">
    <location>
        <begin position="14"/>
        <end position="15"/>
    </location>
    <ligand>
        <name>ATP</name>
        <dbReference type="ChEBI" id="CHEBI:30616"/>
    </ligand>
</feature>
<feature type="binding site" evidence="1">
    <location>
        <begin position="19"/>
        <end position="22"/>
    </location>
    <ligand>
        <name>ATP</name>
        <dbReference type="ChEBI" id="CHEBI:30616"/>
    </ligand>
</feature>
<feature type="binding site" evidence="1">
    <location>
        <position position="100"/>
    </location>
    <ligand>
        <name>ATP</name>
        <dbReference type="ChEBI" id="CHEBI:30616"/>
    </ligand>
</feature>
<name>RIBL_PYRAB</name>
<reference key="1">
    <citation type="journal article" date="2003" name="Mol. Microbiol.">
        <title>An integrated analysis of the genome of the hyperthermophilic archaeon Pyrococcus abyssi.</title>
        <authorList>
            <person name="Cohen G.N."/>
            <person name="Barbe V."/>
            <person name="Flament D."/>
            <person name="Galperin M."/>
            <person name="Heilig R."/>
            <person name="Lecompte O."/>
            <person name="Poch O."/>
            <person name="Prieur D."/>
            <person name="Querellou J."/>
            <person name="Ripp R."/>
            <person name="Thierry J.-C."/>
            <person name="Van der Oost J."/>
            <person name="Weissenbach J."/>
            <person name="Zivanovic Y."/>
            <person name="Forterre P."/>
        </authorList>
    </citation>
    <scope>NUCLEOTIDE SEQUENCE [LARGE SCALE GENOMIC DNA]</scope>
    <source>
        <strain>GE5 / Orsay</strain>
    </source>
</reference>
<reference key="2">
    <citation type="journal article" date="2012" name="Curr. Microbiol.">
        <title>Re-annotation of two hyperthermophilic archaea Pyrococcus abyssi GE5 and Pyrococcus furiosus DSM 3638.</title>
        <authorList>
            <person name="Gao J."/>
            <person name="Wang J."/>
        </authorList>
    </citation>
    <scope>GENOME REANNOTATION</scope>
    <source>
        <strain>GE5 / Orsay</strain>
    </source>
</reference>
<gene>
    <name evidence="1" type="primary">ribL</name>
    <name type="ordered locus">PYRAB13170</name>
    <name type="ORF">PAB1507</name>
</gene>